<name>RL14_DESDA</name>
<gene>
    <name evidence="1" type="primary">rplN</name>
    <name type="ordered locus">Ddes_0670</name>
</gene>
<protein>
    <recommendedName>
        <fullName evidence="1">Large ribosomal subunit protein uL14</fullName>
    </recommendedName>
    <alternativeName>
        <fullName evidence="2">50S ribosomal protein L14</fullName>
    </alternativeName>
</protein>
<comment type="function">
    <text evidence="1">Binds to 23S rRNA. Forms part of two intersubunit bridges in the 70S ribosome.</text>
</comment>
<comment type="subunit">
    <text evidence="1">Part of the 50S ribosomal subunit. Forms a cluster with proteins L3 and L19. In the 70S ribosome, L14 and L19 interact and together make contacts with the 16S rRNA in bridges B5 and B8.</text>
</comment>
<comment type="similarity">
    <text evidence="1">Belongs to the universal ribosomal protein uL14 family.</text>
</comment>
<accession>B8IYI2</accession>
<feature type="chain" id="PRO_1000166916" description="Large ribosomal subunit protein uL14">
    <location>
        <begin position="1"/>
        <end position="122"/>
    </location>
</feature>
<reference key="1">
    <citation type="submission" date="2009-01" db="EMBL/GenBank/DDBJ databases">
        <title>Complete sequence of Desulfovibrio desulfuricans subsp. desulfuricans str. ATCC 27774.</title>
        <authorList>
            <consortium name="US DOE Joint Genome Institute"/>
            <person name="Lucas S."/>
            <person name="Copeland A."/>
            <person name="Lapidus A."/>
            <person name="Glavina del Rio T."/>
            <person name="Tice H."/>
            <person name="Bruce D."/>
            <person name="Goodwin L."/>
            <person name="Pitluck S."/>
            <person name="Sims D."/>
            <person name="Lu M."/>
            <person name="Kiss H."/>
            <person name="Meineke L."/>
            <person name="Brettin T."/>
            <person name="Detter J.C."/>
            <person name="Han C."/>
            <person name="Larimer F."/>
            <person name="Land M."/>
            <person name="Hauser L."/>
            <person name="Kyrpides N."/>
            <person name="Ovchinnikova G."/>
            <person name="Hazen T.C."/>
        </authorList>
    </citation>
    <scope>NUCLEOTIDE SEQUENCE [LARGE SCALE GENOMIC DNA]</scope>
    <source>
        <strain>ATCC 27774 / DSM 6949 / MB</strain>
    </source>
</reference>
<proteinExistence type="inferred from homology"/>
<dbReference type="EMBL" id="CP001358">
    <property type="protein sequence ID" value="ACL48578.1"/>
    <property type="molecule type" value="Genomic_DNA"/>
</dbReference>
<dbReference type="SMR" id="B8IYI2"/>
<dbReference type="STRING" id="525146.Ddes_0670"/>
<dbReference type="KEGG" id="dds:Ddes_0670"/>
<dbReference type="eggNOG" id="COG0093">
    <property type="taxonomic scope" value="Bacteria"/>
</dbReference>
<dbReference type="HOGENOM" id="CLU_095071_2_1_7"/>
<dbReference type="GO" id="GO:0022625">
    <property type="term" value="C:cytosolic large ribosomal subunit"/>
    <property type="evidence" value="ECO:0007669"/>
    <property type="project" value="TreeGrafter"/>
</dbReference>
<dbReference type="GO" id="GO:0070180">
    <property type="term" value="F:large ribosomal subunit rRNA binding"/>
    <property type="evidence" value="ECO:0007669"/>
    <property type="project" value="TreeGrafter"/>
</dbReference>
<dbReference type="GO" id="GO:0003735">
    <property type="term" value="F:structural constituent of ribosome"/>
    <property type="evidence" value="ECO:0007669"/>
    <property type="project" value="InterPro"/>
</dbReference>
<dbReference type="GO" id="GO:0006412">
    <property type="term" value="P:translation"/>
    <property type="evidence" value="ECO:0007669"/>
    <property type="project" value="UniProtKB-UniRule"/>
</dbReference>
<dbReference type="CDD" id="cd00337">
    <property type="entry name" value="Ribosomal_uL14"/>
    <property type="match status" value="1"/>
</dbReference>
<dbReference type="FunFam" id="2.40.150.20:FF:000001">
    <property type="entry name" value="50S ribosomal protein L14"/>
    <property type="match status" value="1"/>
</dbReference>
<dbReference type="Gene3D" id="2.40.150.20">
    <property type="entry name" value="Ribosomal protein L14"/>
    <property type="match status" value="1"/>
</dbReference>
<dbReference type="HAMAP" id="MF_01367">
    <property type="entry name" value="Ribosomal_uL14"/>
    <property type="match status" value="1"/>
</dbReference>
<dbReference type="InterPro" id="IPR000218">
    <property type="entry name" value="Ribosomal_uL14"/>
</dbReference>
<dbReference type="InterPro" id="IPR005745">
    <property type="entry name" value="Ribosomal_uL14_bac-type"/>
</dbReference>
<dbReference type="InterPro" id="IPR019972">
    <property type="entry name" value="Ribosomal_uL14_CS"/>
</dbReference>
<dbReference type="InterPro" id="IPR036853">
    <property type="entry name" value="Ribosomal_uL14_sf"/>
</dbReference>
<dbReference type="NCBIfam" id="TIGR01067">
    <property type="entry name" value="rplN_bact"/>
    <property type="match status" value="1"/>
</dbReference>
<dbReference type="PANTHER" id="PTHR11761">
    <property type="entry name" value="50S/60S RIBOSOMAL PROTEIN L14/L23"/>
    <property type="match status" value="1"/>
</dbReference>
<dbReference type="PANTHER" id="PTHR11761:SF3">
    <property type="entry name" value="LARGE RIBOSOMAL SUBUNIT PROTEIN UL14M"/>
    <property type="match status" value="1"/>
</dbReference>
<dbReference type="Pfam" id="PF00238">
    <property type="entry name" value="Ribosomal_L14"/>
    <property type="match status" value="1"/>
</dbReference>
<dbReference type="SMART" id="SM01374">
    <property type="entry name" value="Ribosomal_L14"/>
    <property type="match status" value="1"/>
</dbReference>
<dbReference type="SUPFAM" id="SSF50193">
    <property type="entry name" value="Ribosomal protein L14"/>
    <property type="match status" value="1"/>
</dbReference>
<dbReference type="PROSITE" id="PS00049">
    <property type="entry name" value="RIBOSOMAL_L14"/>
    <property type="match status" value="1"/>
</dbReference>
<sequence length="122" mass="13165">MIQVESTLQVADNSGAKKVACIKVLGGSHRRYASVGDIVVVSVKEAIPHSKVKKGDVMKAVIVRTAKEVRRMDGSYIKFDGNAAVLLSTQGEPIGTRIFGPVARELRAMNFMKIISLAPEVL</sequence>
<organism>
    <name type="scientific">Desulfovibrio desulfuricans (strain ATCC 27774 / DSM 6949 / MB)</name>
    <dbReference type="NCBI Taxonomy" id="525146"/>
    <lineage>
        <taxon>Bacteria</taxon>
        <taxon>Pseudomonadati</taxon>
        <taxon>Thermodesulfobacteriota</taxon>
        <taxon>Desulfovibrionia</taxon>
        <taxon>Desulfovibrionales</taxon>
        <taxon>Desulfovibrionaceae</taxon>
        <taxon>Desulfovibrio</taxon>
    </lineage>
</organism>
<keyword id="KW-0687">Ribonucleoprotein</keyword>
<keyword id="KW-0689">Ribosomal protein</keyword>
<keyword id="KW-0694">RNA-binding</keyword>
<keyword id="KW-0699">rRNA-binding</keyword>
<evidence type="ECO:0000255" key="1">
    <source>
        <dbReference type="HAMAP-Rule" id="MF_01367"/>
    </source>
</evidence>
<evidence type="ECO:0000305" key="2"/>